<proteinExistence type="inferred from homology"/>
<reference key="1">
    <citation type="journal article" date="1993" name="Gene">
        <title>Sequences of two cDNA clones from the medfly Ceratitis capitata encoding antibacterial peptides of the cecropin family.</title>
        <authorList>
            <person name="Rosetto M."/>
            <person name="Manetti A.G.O."/>
            <person name="Marchini D."/>
            <person name="Dallai R."/>
            <person name="Telford J.L."/>
            <person name="Baldari C.T."/>
        </authorList>
    </citation>
    <scope>NUCLEOTIDE SEQUENCE [MRNA]</scope>
</reference>
<protein>
    <recommendedName>
        <fullName>Cecropin-2</fullName>
    </recommendedName>
</protein>
<keyword id="KW-0027">Amidation</keyword>
<keyword id="KW-0044">Antibiotic</keyword>
<keyword id="KW-0929">Antimicrobial</keyword>
<keyword id="KW-0391">Immunity</keyword>
<keyword id="KW-0399">Innate immunity</keyword>
<keyword id="KW-0964">Secreted</keyword>
<keyword id="KW-0732">Signal</keyword>
<accession>Q06590</accession>
<dbReference type="EMBL" id="X70029">
    <property type="protein sequence ID" value="CAA49617.1"/>
    <property type="molecule type" value="mRNA"/>
</dbReference>
<dbReference type="PIR" id="JT0674">
    <property type="entry name" value="JT0674"/>
</dbReference>
<dbReference type="RefSeq" id="XP_012160526.1">
    <property type="nucleotide sequence ID" value="XM_012305136.1"/>
</dbReference>
<dbReference type="SMR" id="Q06590"/>
<dbReference type="EnsemblMetazoa" id="XM_004534273.3">
    <property type="protein sequence ID" value="XP_004534330.1"/>
    <property type="gene ID" value="LOC101456416"/>
</dbReference>
<dbReference type="GeneID" id="101456416"/>
<dbReference type="KEGG" id="ccat:101456416"/>
<dbReference type="OrthoDB" id="7410372at2759"/>
<dbReference type="GO" id="GO:0005615">
    <property type="term" value="C:extracellular space"/>
    <property type="evidence" value="ECO:0007669"/>
    <property type="project" value="TreeGrafter"/>
</dbReference>
<dbReference type="GO" id="GO:0019731">
    <property type="term" value="P:antibacterial humoral response"/>
    <property type="evidence" value="ECO:0007669"/>
    <property type="project" value="InterPro"/>
</dbReference>
<dbReference type="GO" id="GO:0050829">
    <property type="term" value="P:defense response to Gram-negative bacterium"/>
    <property type="evidence" value="ECO:0007669"/>
    <property type="project" value="UniProtKB-ARBA"/>
</dbReference>
<dbReference type="GO" id="GO:0050830">
    <property type="term" value="P:defense response to Gram-positive bacterium"/>
    <property type="evidence" value="ECO:0007669"/>
    <property type="project" value="TreeGrafter"/>
</dbReference>
<dbReference type="GO" id="GO:0045087">
    <property type="term" value="P:innate immune response"/>
    <property type="evidence" value="ECO:0007669"/>
    <property type="project" value="UniProtKB-KW"/>
</dbReference>
<dbReference type="InterPro" id="IPR000875">
    <property type="entry name" value="Cecropin"/>
</dbReference>
<dbReference type="InterPro" id="IPR020400">
    <property type="entry name" value="Cecropin_insect"/>
</dbReference>
<dbReference type="PANTHER" id="PTHR38329">
    <property type="entry name" value="CECROPIN-A1-RELATED"/>
    <property type="match status" value="1"/>
</dbReference>
<dbReference type="PANTHER" id="PTHR38329:SF1">
    <property type="entry name" value="CECROPIN-A1-RELATED"/>
    <property type="match status" value="1"/>
</dbReference>
<dbReference type="Pfam" id="PF00272">
    <property type="entry name" value="Cecropin"/>
    <property type="match status" value="1"/>
</dbReference>
<dbReference type="PROSITE" id="PS00268">
    <property type="entry name" value="CECROPIN"/>
    <property type="match status" value="1"/>
</dbReference>
<sequence>MNFNKVLVLLAVIFAVFAGQTEAGWLKKIGKKIERVGQHTRDATIQTIGVAQQAANVAATLKG</sequence>
<comment type="function">
    <text>Cecropins have lytic and antibacterial activity against several Gram-positive and Gram-negative bacteria.</text>
</comment>
<comment type="subcellular location">
    <subcellularLocation>
        <location>Secreted</location>
    </subcellularLocation>
</comment>
<comment type="similarity">
    <text evidence="3">Belongs to the cecropin family.</text>
</comment>
<feature type="signal peptide" evidence="2">
    <location>
        <begin position="1"/>
        <end position="21"/>
    </location>
</feature>
<feature type="propeptide" id="PRO_0000004834" evidence="2">
    <location>
        <begin position="22"/>
        <end position="23"/>
    </location>
</feature>
<feature type="chain" id="PRO_0000004835" description="Cecropin-2">
    <location>
        <begin position="24"/>
        <end position="62"/>
    </location>
</feature>
<feature type="modified residue" description="Lysine amide" evidence="1">
    <location>
        <position position="62"/>
    </location>
</feature>
<evidence type="ECO:0000250" key="1"/>
<evidence type="ECO:0000255" key="2"/>
<evidence type="ECO:0000305" key="3"/>
<organism>
    <name type="scientific">Ceratitis capitata</name>
    <name type="common">Mediterranean fruit fly</name>
    <name type="synonym">Tephritis capitata</name>
    <dbReference type="NCBI Taxonomy" id="7213"/>
    <lineage>
        <taxon>Eukaryota</taxon>
        <taxon>Metazoa</taxon>
        <taxon>Ecdysozoa</taxon>
        <taxon>Arthropoda</taxon>
        <taxon>Hexapoda</taxon>
        <taxon>Insecta</taxon>
        <taxon>Pterygota</taxon>
        <taxon>Neoptera</taxon>
        <taxon>Endopterygota</taxon>
        <taxon>Diptera</taxon>
        <taxon>Brachycera</taxon>
        <taxon>Muscomorpha</taxon>
        <taxon>Tephritoidea</taxon>
        <taxon>Tephritidae</taxon>
        <taxon>Ceratitis</taxon>
        <taxon>Ceratitis</taxon>
    </lineage>
</organism>
<gene>
    <name type="primary">CEC2</name>
</gene>
<name>CEC2_CERCA</name>